<organismHost>
    <name type="scientific">Mycobacterium</name>
    <dbReference type="NCBI Taxonomy" id="1763"/>
</organismHost>
<gene>
    <name type="primary">52</name>
</gene>
<feature type="chain" id="PRO_0000164778" description="Gene 52 protein">
    <location>
        <begin position="1"/>
        <end position="61"/>
    </location>
</feature>
<reference key="1">
    <citation type="journal article" date="1998" name="J. Mol. Biol.">
        <title>Genome structure of mycobacteriophage D29: implications for phage evolution.</title>
        <authorList>
            <person name="Ford M.E."/>
            <person name="Sarkis G.J."/>
            <person name="Belanger A.E."/>
            <person name="Hendrix R.W."/>
            <person name="Hatfull G.F."/>
        </authorList>
    </citation>
    <scope>NUCLEOTIDE SEQUENCE [LARGE SCALE GENOMIC DNA]</scope>
</reference>
<name>VG52_BPMD2</name>
<organism>
    <name type="scientific">Mycobacterium phage D29</name>
    <name type="common">Mycobacteriophage D29</name>
    <dbReference type="NCBI Taxonomy" id="28369"/>
    <lineage>
        <taxon>Viruses</taxon>
        <taxon>Duplodnaviria</taxon>
        <taxon>Heunggongvirae</taxon>
        <taxon>Uroviricota</taxon>
        <taxon>Caudoviricetes</taxon>
        <taxon>Fromanvirus</taxon>
    </lineage>
</organism>
<keyword id="KW-1185">Reference proteome</keyword>
<accession>O64242</accession>
<sequence>MQNLLDPTFNGMPGSEMYRAEVFPELFPHQKPMLLENWSQDDLEQYVGGVFTPGYGQRRPT</sequence>
<dbReference type="EMBL" id="AF022214">
    <property type="protein sequence ID" value="AAC18492.1"/>
    <property type="molecule type" value="Genomic_DNA"/>
</dbReference>
<dbReference type="PIR" id="A72806">
    <property type="entry name" value="A72806"/>
</dbReference>
<dbReference type="RefSeq" id="NP_046867.1">
    <property type="nucleotide sequence ID" value="NC_001900.1"/>
</dbReference>
<dbReference type="GeneID" id="1261594"/>
<dbReference type="KEGG" id="vg:1261594"/>
<dbReference type="OrthoDB" id="24282at10239"/>
<dbReference type="Proteomes" id="UP000002131">
    <property type="component" value="Segment"/>
</dbReference>
<dbReference type="InterPro" id="IPR035344">
    <property type="entry name" value="Gp52"/>
</dbReference>
<dbReference type="Pfam" id="PF17468">
    <property type="entry name" value="GP52"/>
    <property type="match status" value="1"/>
</dbReference>
<protein>
    <recommendedName>
        <fullName>Gene 52 protein</fullName>
    </recommendedName>
    <alternativeName>
        <fullName>Gp52</fullName>
    </alternativeName>
</protein>
<proteinExistence type="predicted"/>